<name>TRUA_NEOSM</name>
<comment type="function">
    <text evidence="1">Formation of pseudouridine at positions 38, 39 and 40 in the anticodon stem and loop of transfer RNAs.</text>
</comment>
<comment type="catalytic activity">
    <reaction evidence="1">
        <text>uridine(38/39/40) in tRNA = pseudouridine(38/39/40) in tRNA</text>
        <dbReference type="Rhea" id="RHEA:22376"/>
        <dbReference type="Rhea" id="RHEA-COMP:10085"/>
        <dbReference type="Rhea" id="RHEA-COMP:10087"/>
        <dbReference type="ChEBI" id="CHEBI:65314"/>
        <dbReference type="ChEBI" id="CHEBI:65315"/>
        <dbReference type="EC" id="5.4.99.12"/>
    </reaction>
</comment>
<comment type="subunit">
    <text evidence="1">Homodimer.</text>
</comment>
<comment type="similarity">
    <text evidence="1">Belongs to the tRNA pseudouridine synthase TruA family.</text>
</comment>
<keyword id="KW-0413">Isomerase</keyword>
<keyword id="KW-0819">tRNA processing</keyword>
<gene>
    <name evidence="1" type="primary">truA</name>
    <name type="ordered locus">NSE_0020</name>
</gene>
<feature type="chain" id="PRO_1000071596" description="tRNA pseudouridine synthase A">
    <location>
        <begin position="1"/>
        <end position="243"/>
    </location>
</feature>
<feature type="active site" description="Nucleophile" evidence="1">
    <location>
        <position position="51"/>
    </location>
</feature>
<feature type="binding site" evidence="1">
    <location>
        <position position="111"/>
    </location>
    <ligand>
        <name>substrate</name>
    </ligand>
</feature>
<organism>
    <name type="scientific">Neorickettsia sennetsu (strain ATCC VR-367 / Miyayama)</name>
    <name type="common">Ehrlichia sennetsu</name>
    <dbReference type="NCBI Taxonomy" id="222891"/>
    <lineage>
        <taxon>Bacteria</taxon>
        <taxon>Pseudomonadati</taxon>
        <taxon>Pseudomonadota</taxon>
        <taxon>Alphaproteobacteria</taxon>
        <taxon>Rickettsiales</taxon>
        <taxon>Anaplasmataceae</taxon>
        <taxon>Neorickettsia</taxon>
    </lineage>
</organism>
<proteinExistence type="inferred from homology"/>
<evidence type="ECO:0000255" key="1">
    <source>
        <dbReference type="HAMAP-Rule" id="MF_00171"/>
    </source>
</evidence>
<reference key="1">
    <citation type="journal article" date="2006" name="PLoS Genet.">
        <title>Comparative genomics of emerging human ehrlichiosis agents.</title>
        <authorList>
            <person name="Dunning Hotopp J.C."/>
            <person name="Lin M."/>
            <person name="Madupu R."/>
            <person name="Crabtree J."/>
            <person name="Angiuoli S.V."/>
            <person name="Eisen J.A."/>
            <person name="Seshadri R."/>
            <person name="Ren Q."/>
            <person name="Wu M."/>
            <person name="Utterback T.R."/>
            <person name="Smith S."/>
            <person name="Lewis M."/>
            <person name="Khouri H."/>
            <person name="Zhang C."/>
            <person name="Niu H."/>
            <person name="Lin Q."/>
            <person name="Ohashi N."/>
            <person name="Zhi N."/>
            <person name="Nelson W.C."/>
            <person name="Brinkac L.M."/>
            <person name="Dodson R.J."/>
            <person name="Rosovitz M.J."/>
            <person name="Sundaram J.P."/>
            <person name="Daugherty S.C."/>
            <person name="Davidsen T."/>
            <person name="Durkin A.S."/>
            <person name="Gwinn M.L."/>
            <person name="Haft D.H."/>
            <person name="Selengut J.D."/>
            <person name="Sullivan S.A."/>
            <person name="Zafar N."/>
            <person name="Zhou L."/>
            <person name="Benahmed F."/>
            <person name="Forberger H."/>
            <person name="Halpin R."/>
            <person name="Mulligan S."/>
            <person name="Robinson J."/>
            <person name="White O."/>
            <person name="Rikihisa Y."/>
            <person name="Tettelin H."/>
        </authorList>
    </citation>
    <scope>NUCLEOTIDE SEQUENCE [LARGE SCALE GENOMIC DNA]</scope>
    <source>
        <strain>ATCC VR-367 / Miyayama</strain>
    </source>
</reference>
<dbReference type="EC" id="5.4.99.12" evidence="1"/>
<dbReference type="EMBL" id="CP000237">
    <property type="protein sequence ID" value="ABD46218.1"/>
    <property type="molecule type" value="Genomic_DNA"/>
</dbReference>
<dbReference type="RefSeq" id="WP_011451429.1">
    <property type="nucleotide sequence ID" value="NC_007798.1"/>
</dbReference>
<dbReference type="SMR" id="Q2GF33"/>
<dbReference type="STRING" id="222891.NSE_0020"/>
<dbReference type="KEGG" id="nse:NSE_0020"/>
<dbReference type="eggNOG" id="COG0101">
    <property type="taxonomic scope" value="Bacteria"/>
</dbReference>
<dbReference type="HOGENOM" id="CLU_014673_0_2_5"/>
<dbReference type="OrthoDB" id="9811823at2"/>
<dbReference type="Proteomes" id="UP000001942">
    <property type="component" value="Chromosome"/>
</dbReference>
<dbReference type="GO" id="GO:0003723">
    <property type="term" value="F:RNA binding"/>
    <property type="evidence" value="ECO:0007669"/>
    <property type="project" value="InterPro"/>
</dbReference>
<dbReference type="GO" id="GO:0160147">
    <property type="term" value="F:tRNA pseudouridine(38-40) synthase activity"/>
    <property type="evidence" value="ECO:0007669"/>
    <property type="project" value="UniProtKB-EC"/>
</dbReference>
<dbReference type="GO" id="GO:0031119">
    <property type="term" value="P:tRNA pseudouridine synthesis"/>
    <property type="evidence" value="ECO:0007669"/>
    <property type="project" value="UniProtKB-UniRule"/>
</dbReference>
<dbReference type="CDD" id="cd02570">
    <property type="entry name" value="PseudoU_synth_EcTruA"/>
    <property type="match status" value="1"/>
</dbReference>
<dbReference type="FunFam" id="3.30.70.580:FF:000001">
    <property type="entry name" value="tRNA pseudouridine synthase A"/>
    <property type="match status" value="1"/>
</dbReference>
<dbReference type="Gene3D" id="3.30.70.660">
    <property type="entry name" value="Pseudouridine synthase I, catalytic domain, C-terminal subdomain"/>
    <property type="match status" value="1"/>
</dbReference>
<dbReference type="Gene3D" id="3.30.70.580">
    <property type="entry name" value="Pseudouridine synthase I, catalytic domain, N-terminal subdomain"/>
    <property type="match status" value="1"/>
</dbReference>
<dbReference type="HAMAP" id="MF_00171">
    <property type="entry name" value="TruA"/>
    <property type="match status" value="1"/>
</dbReference>
<dbReference type="InterPro" id="IPR020103">
    <property type="entry name" value="PsdUridine_synth_cat_dom_sf"/>
</dbReference>
<dbReference type="InterPro" id="IPR001406">
    <property type="entry name" value="PsdUridine_synth_TruA"/>
</dbReference>
<dbReference type="InterPro" id="IPR020097">
    <property type="entry name" value="PsdUridine_synth_TruA_a/b_dom"/>
</dbReference>
<dbReference type="InterPro" id="IPR020095">
    <property type="entry name" value="PsdUridine_synth_TruA_C"/>
</dbReference>
<dbReference type="InterPro" id="IPR020094">
    <property type="entry name" value="TruA/RsuA/RluB/E/F_N"/>
</dbReference>
<dbReference type="NCBIfam" id="TIGR00071">
    <property type="entry name" value="hisT_truA"/>
    <property type="match status" value="1"/>
</dbReference>
<dbReference type="PANTHER" id="PTHR11142">
    <property type="entry name" value="PSEUDOURIDYLATE SYNTHASE"/>
    <property type="match status" value="1"/>
</dbReference>
<dbReference type="PANTHER" id="PTHR11142:SF0">
    <property type="entry name" value="TRNA PSEUDOURIDINE SYNTHASE-LIKE 1"/>
    <property type="match status" value="1"/>
</dbReference>
<dbReference type="Pfam" id="PF01416">
    <property type="entry name" value="PseudoU_synth_1"/>
    <property type="match status" value="2"/>
</dbReference>
<dbReference type="PIRSF" id="PIRSF001430">
    <property type="entry name" value="tRNA_psdUrid_synth"/>
    <property type="match status" value="1"/>
</dbReference>
<dbReference type="SUPFAM" id="SSF55120">
    <property type="entry name" value="Pseudouridine synthase"/>
    <property type="match status" value="1"/>
</dbReference>
<protein>
    <recommendedName>
        <fullName evidence="1">tRNA pseudouridine synthase A</fullName>
        <ecNumber evidence="1">5.4.99.12</ecNumber>
    </recommendedName>
    <alternativeName>
        <fullName evidence="1">tRNA pseudouridine(38-40) synthase</fullName>
    </alternativeName>
    <alternativeName>
        <fullName evidence="1">tRNA pseudouridylate synthase I</fullName>
    </alternativeName>
    <alternativeName>
        <fullName evidence="1">tRNA-uridine isomerase I</fullName>
    </alternativeName>
</protein>
<sequence>MRYKAIVEYVGTGFSGWQKQMSAPSVQEELESVLSFLLKEKIAVNVAGRTDAGVHALGQVFHFDARESTLQPFQIVNAVNYHLKEKLIVLLKIEIVDETFDARFSAIRRHYQYKITNRKTPLAVFKNRSWHVPQTLNLDLIREQAQYLVGKHDFQSFRSSKCGASNAIRTLDRLEVEKNGEEMIFHASAKSFLHHQVRIMVGTLVAIASGKLMSVTEILSKKNRRYAGPTAPPCGLYLLKVDY</sequence>
<accession>Q2GF33</accession>